<proteinExistence type="evidence at protein level"/>
<sequence length="152" mass="17149">MANCERTFIAIKPDGVQRGLVGEIIKRFEQKGFRLVGLKFMQASEDLLKEHYVDLKDRPFFAGLVKYMHSGPVVAMVWEGLNVVKTGRVMLGETNPADSKPGTIRGDFCIQVGRNIIHGSDSVESAEKEIGLWFHPEELVDYTSCAQNWIYE</sequence>
<name>NDKA_HUMAN</name>
<accession>P15531</accession>
<accession>Q6FGK3</accession>
<accession>Q86XQ2</accession>
<accession>Q9UDJ6</accession>
<reference key="1">
    <citation type="journal article" date="1989" name="Nature">
        <title>Reduced Nm23/Awd protein in tumour metastasis and aberrant Drosophila development.</title>
        <authorList>
            <person name="Rosengard A.M."/>
            <person name="Krutzsch H.C."/>
            <person name="Shearn A."/>
            <person name="Biggs J.R."/>
            <person name="Barker E."/>
            <person name="Margulies I.M.K."/>
            <person name="King C.R."/>
            <person name="Liotta L.A."/>
            <person name="Steeg P.S."/>
        </authorList>
    </citation>
    <scope>NUCLEOTIDE SEQUENCE [MRNA] (ISOFORM 1)</scope>
</reference>
<reference key="2">
    <citation type="journal article" date="1991" name="J. Biol. Chem.">
        <title>Nucleoside diphosphate kinase from human erythrocytes. Structural characterization of the two polypeptide chains responsible for heterogeneity of the hexameric enzyme.</title>
        <authorList>
            <person name="Gilles A.-M."/>
            <person name="Presecan E."/>
            <person name="Vonica A."/>
            <person name="Lascu I."/>
        </authorList>
    </citation>
    <scope>PROTEIN SEQUENCE (ISOFORM 1)</scope>
    <scope>SUBUNIT</scope>
    <scope>ACTIVE SITE</scope>
</reference>
<reference key="3">
    <citation type="journal article" date="1993" name="Cancer Res.">
        <title>Mutation in the nm23 gene is associated with metastasis in colorectal cancer.</title>
        <authorList>
            <person name="Wang L."/>
            <person name="Patel U."/>
            <person name="Ghosh L."/>
            <person name="Chen H.C."/>
            <person name="Banerjee S."/>
        </authorList>
    </citation>
    <scope>NUCLEOTIDE SEQUENCE [MRNA] (ISOFORM 1)</scope>
</reference>
<reference key="4">
    <citation type="journal article" date="1994" name="Hum. Genet.">
        <title>Isolation and characterization of the human genomic locus coding for the putative metastasis control gene nm23-H1.</title>
        <authorList>
            <person name="Dooley S."/>
            <person name="Seib T."/>
            <person name="Engel M."/>
            <person name="Theisinger B."/>
            <person name="Janz H."/>
            <person name="Piontek K."/>
            <person name="Zang K.D."/>
            <person name="Welter C."/>
        </authorList>
    </citation>
    <scope>NUCLEOTIDE SEQUENCE [GENOMIC DNA] (ISOFORM 1)</scope>
</reference>
<reference key="5">
    <citation type="journal article" date="2003" name="J. Hum. Genet.">
        <title>Isolation and characterization of a novel human NM23-H1B gene, a different transcript of NM23-H1.</title>
        <authorList>
            <person name="Ni X."/>
            <person name="Gu S."/>
            <person name="Dai J."/>
            <person name="Cheng H."/>
            <person name="Guo L."/>
            <person name="Li L."/>
            <person name="Ji C."/>
            <person name="Xie Y."/>
            <person name="Ying K."/>
            <person name="Mao Y."/>
        </authorList>
    </citation>
    <scope>NUCLEOTIDE SEQUENCE [MRNA] (ISOFORM 2)</scope>
    <scope>TISSUE SPECIFICITY</scope>
</reference>
<reference key="6">
    <citation type="journal article" date="2004" name="Nat. Genet.">
        <title>Complete sequencing and characterization of 21,243 full-length human cDNAs.</title>
        <authorList>
            <person name="Ota T."/>
            <person name="Suzuki Y."/>
            <person name="Nishikawa T."/>
            <person name="Otsuki T."/>
            <person name="Sugiyama T."/>
            <person name="Irie R."/>
            <person name="Wakamatsu A."/>
            <person name="Hayashi K."/>
            <person name="Sato H."/>
            <person name="Nagai K."/>
            <person name="Kimura K."/>
            <person name="Makita H."/>
            <person name="Sekine M."/>
            <person name="Obayashi M."/>
            <person name="Nishi T."/>
            <person name="Shibahara T."/>
            <person name="Tanaka T."/>
            <person name="Ishii S."/>
            <person name="Yamamoto J."/>
            <person name="Saito K."/>
            <person name="Kawai Y."/>
            <person name="Isono Y."/>
            <person name="Nakamura Y."/>
            <person name="Nagahari K."/>
            <person name="Murakami K."/>
            <person name="Yasuda T."/>
            <person name="Iwayanagi T."/>
            <person name="Wagatsuma M."/>
            <person name="Shiratori A."/>
            <person name="Sudo H."/>
            <person name="Hosoiri T."/>
            <person name="Kaku Y."/>
            <person name="Kodaira H."/>
            <person name="Kondo H."/>
            <person name="Sugawara M."/>
            <person name="Takahashi M."/>
            <person name="Kanda K."/>
            <person name="Yokoi T."/>
            <person name="Furuya T."/>
            <person name="Kikkawa E."/>
            <person name="Omura Y."/>
            <person name="Abe K."/>
            <person name="Kamihara K."/>
            <person name="Katsuta N."/>
            <person name="Sato K."/>
            <person name="Tanikawa M."/>
            <person name="Yamazaki M."/>
            <person name="Ninomiya K."/>
            <person name="Ishibashi T."/>
            <person name="Yamashita H."/>
            <person name="Murakawa K."/>
            <person name="Fujimori K."/>
            <person name="Tanai H."/>
            <person name="Kimata M."/>
            <person name="Watanabe M."/>
            <person name="Hiraoka S."/>
            <person name="Chiba Y."/>
            <person name="Ishida S."/>
            <person name="Ono Y."/>
            <person name="Takiguchi S."/>
            <person name="Watanabe S."/>
            <person name="Yosida M."/>
            <person name="Hotuta T."/>
            <person name="Kusano J."/>
            <person name="Kanehori K."/>
            <person name="Takahashi-Fujii A."/>
            <person name="Hara H."/>
            <person name="Tanase T.-O."/>
            <person name="Nomura Y."/>
            <person name="Togiya S."/>
            <person name="Komai F."/>
            <person name="Hara R."/>
            <person name="Takeuchi K."/>
            <person name="Arita M."/>
            <person name="Imose N."/>
            <person name="Musashino K."/>
            <person name="Yuuki H."/>
            <person name="Oshima A."/>
            <person name="Sasaki N."/>
            <person name="Aotsuka S."/>
            <person name="Yoshikawa Y."/>
            <person name="Matsunawa H."/>
            <person name="Ichihara T."/>
            <person name="Shiohata N."/>
            <person name="Sano S."/>
            <person name="Moriya S."/>
            <person name="Momiyama H."/>
            <person name="Satoh N."/>
            <person name="Takami S."/>
            <person name="Terashima Y."/>
            <person name="Suzuki O."/>
            <person name="Nakagawa S."/>
            <person name="Senoh A."/>
            <person name="Mizoguchi H."/>
            <person name="Goto Y."/>
            <person name="Shimizu F."/>
            <person name="Wakebe H."/>
            <person name="Hishigaki H."/>
            <person name="Watanabe T."/>
            <person name="Sugiyama A."/>
            <person name="Takemoto M."/>
            <person name="Kawakami B."/>
            <person name="Yamazaki M."/>
            <person name="Watanabe K."/>
            <person name="Kumagai A."/>
            <person name="Itakura S."/>
            <person name="Fukuzumi Y."/>
            <person name="Fujimori Y."/>
            <person name="Komiyama M."/>
            <person name="Tashiro H."/>
            <person name="Tanigami A."/>
            <person name="Fujiwara T."/>
            <person name="Ono T."/>
            <person name="Yamada K."/>
            <person name="Fujii Y."/>
            <person name="Ozaki K."/>
            <person name="Hirao M."/>
            <person name="Ohmori Y."/>
            <person name="Kawabata A."/>
            <person name="Hikiji T."/>
            <person name="Kobatake N."/>
            <person name="Inagaki H."/>
            <person name="Ikema Y."/>
            <person name="Okamoto S."/>
            <person name="Okitani R."/>
            <person name="Kawakami T."/>
            <person name="Noguchi S."/>
            <person name="Itoh T."/>
            <person name="Shigeta K."/>
            <person name="Senba T."/>
            <person name="Matsumura K."/>
            <person name="Nakajima Y."/>
            <person name="Mizuno T."/>
            <person name="Morinaga M."/>
            <person name="Sasaki M."/>
            <person name="Togashi T."/>
            <person name="Oyama M."/>
            <person name="Hata H."/>
            <person name="Watanabe M."/>
            <person name="Komatsu T."/>
            <person name="Mizushima-Sugano J."/>
            <person name="Satoh T."/>
            <person name="Shirai Y."/>
            <person name="Takahashi Y."/>
            <person name="Nakagawa K."/>
            <person name="Okumura K."/>
            <person name="Nagase T."/>
            <person name="Nomura N."/>
            <person name="Kikuchi H."/>
            <person name="Masuho Y."/>
            <person name="Yamashita R."/>
            <person name="Nakai K."/>
            <person name="Yada T."/>
            <person name="Nakamura Y."/>
            <person name="Ohara O."/>
            <person name="Isogai T."/>
            <person name="Sugano S."/>
        </authorList>
    </citation>
    <scope>NUCLEOTIDE SEQUENCE [LARGE SCALE MRNA] (ISOFORM 1)</scope>
</reference>
<reference key="7">
    <citation type="submission" date="2004-06" db="EMBL/GenBank/DDBJ databases">
        <title>Cloning of human full open reading frames in Gateway(TM) system entry vector (pDONR201).</title>
        <authorList>
            <person name="Halleck A."/>
            <person name="Ebert L."/>
            <person name="Mkoundinya M."/>
            <person name="Schick M."/>
            <person name="Eisenstein S."/>
            <person name="Neubert P."/>
            <person name="Kstrang K."/>
            <person name="Schatten R."/>
            <person name="Shen B."/>
            <person name="Henze S."/>
            <person name="Mar W."/>
            <person name="Korn B."/>
            <person name="Zuo D."/>
            <person name="Hu Y."/>
            <person name="LaBaer J."/>
        </authorList>
    </citation>
    <scope>NUCLEOTIDE SEQUENCE [LARGE SCALE MRNA] (ISOFORM 1)</scope>
</reference>
<reference key="8">
    <citation type="journal article" date="2006" name="Nature">
        <title>DNA sequence of human chromosome 17 and analysis of rearrangement in the human lineage.</title>
        <authorList>
            <person name="Zody M.C."/>
            <person name="Garber M."/>
            <person name="Adams D.J."/>
            <person name="Sharpe T."/>
            <person name="Harrow J."/>
            <person name="Lupski J.R."/>
            <person name="Nicholson C."/>
            <person name="Searle S.M."/>
            <person name="Wilming L."/>
            <person name="Young S.K."/>
            <person name="Abouelleil A."/>
            <person name="Allen N.R."/>
            <person name="Bi W."/>
            <person name="Bloom T."/>
            <person name="Borowsky M.L."/>
            <person name="Bugalter B.E."/>
            <person name="Butler J."/>
            <person name="Chang J.L."/>
            <person name="Chen C.-K."/>
            <person name="Cook A."/>
            <person name="Corum B."/>
            <person name="Cuomo C.A."/>
            <person name="de Jong P.J."/>
            <person name="DeCaprio D."/>
            <person name="Dewar K."/>
            <person name="FitzGerald M."/>
            <person name="Gilbert J."/>
            <person name="Gibson R."/>
            <person name="Gnerre S."/>
            <person name="Goldstein S."/>
            <person name="Grafham D.V."/>
            <person name="Grocock R."/>
            <person name="Hafez N."/>
            <person name="Hagopian D.S."/>
            <person name="Hart E."/>
            <person name="Norman C.H."/>
            <person name="Humphray S."/>
            <person name="Jaffe D.B."/>
            <person name="Jones M."/>
            <person name="Kamal M."/>
            <person name="Khodiyar V.K."/>
            <person name="LaButti K."/>
            <person name="Laird G."/>
            <person name="Lehoczky J."/>
            <person name="Liu X."/>
            <person name="Lokyitsang T."/>
            <person name="Loveland J."/>
            <person name="Lui A."/>
            <person name="Macdonald P."/>
            <person name="Major J.E."/>
            <person name="Matthews L."/>
            <person name="Mauceli E."/>
            <person name="McCarroll S.A."/>
            <person name="Mihalev A.H."/>
            <person name="Mudge J."/>
            <person name="Nguyen C."/>
            <person name="Nicol R."/>
            <person name="O'Leary S.B."/>
            <person name="Osoegawa K."/>
            <person name="Schwartz D.C."/>
            <person name="Shaw-Smith C."/>
            <person name="Stankiewicz P."/>
            <person name="Steward C."/>
            <person name="Swarbreck D."/>
            <person name="Venkataraman V."/>
            <person name="Whittaker C.A."/>
            <person name="Yang X."/>
            <person name="Zimmer A.R."/>
            <person name="Bradley A."/>
            <person name="Hubbard T."/>
            <person name="Birren B.W."/>
            <person name="Rogers J."/>
            <person name="Lander E.S."/>
            <person name="Nusbaum C."/>
        </authorList>
    </citation>
    <scope>NUCLEOTIDE SEQUENCE [LARGE SCALE GENOMIC DNA]</scope>
</reference>
<reference key="9">
    <citation type="submission" date="2005-09" db="EMBL/GenBank/DDBJ databases">
        <authorList>
            <person name="Mural R.J."/>
            <person name="Istrail S."/>
            <person name="Sutton G.G."/>
            <person name="Florea L."/>
            <person name="Halpern A.L."/>
            <person name="Mobarry C.M."/>
            <person name="Lippert R."/>
            <person name="Walenz B."/>
            <person name="Shatkay H."/>
            <person name="Dew I."/>
            <person name="Miller J.R."/>
            <person name="Flanigan M.J."/>
            <person name="Edwards N.J."/>
            <person name="Bolanos R."/>
            <person name="Fasulo D."/>
            <person name="Halldorsson B.V."/>
            <person name="Hannenhalli S."/>
            <person name="Turner R."/>
            <person name="Yooseph S."/>
            <person name="Lu F."/>
            <person name="Nusskern D.R."/>
            <person name="Shue B.C."/>
            <person name="Zheng X.H."/>
            <person name="Zhong F."/>
            <person name="Delcher A.L."/>
            <person name="Huson D.H."/>
            <person name="Kravitz S.A."/>
            <person name="Mouchard L."/>
            <person name="Reinert K."/>
            <person name="Remington K.A."/>
            <person name="Clark A.G."/>
            <person name="Waterman M.S."/>
            <person name="Eichler E.E."/>
            <person name="Adams M.D."/>
            <person name="Hunkapiller M.W."/>
            <person name="Myers E.W."/>
            <person name="Venter J.C."/>
        </authorList>
    </citation>
    <scope>NUCLEOTIDE SEQUENCE [LARGE SCALE GENOMIC DNA]</scope>
</reference>
<reference key="10">
    <citation type="journal article" date="2004" name="Genome Res.">
        <title>The status, quality, and expansion of the NIH full-length cDNA project: the Mammalian Gene Collection (MGC).</title>
        <authorList>
            <consortium name="The MGC Project Team"/>
        </authorList>
    </citation>
    <scope>NUCLEOTIDE SEQUENCE [LARGE SCALE MRNA] (ISOFORM 1)</scope>
    <source>
        <tissue>Brain</tissue>
        <tissue>Lung</tissue>
    </source>
</reference>
<reference key="11">
    <citation type="journal article" date="1991" name="J. Clin. Invest.">
        <title>High levels of p19/nm23 protein in neuroblastoma are associated with advanced stage disease and with N-myc gene amplification.</title>
        <authorList>
            <person name="Hailat N."/>
            <person name="Keim D.R."/>
            <person name="Melhem R.F."/>
            <person name="Zhu X.X."/>
            <person name="Eckerskorn C."/>
            <person name="Brodeur G.M."/>
            <person name="Reynolds C.P."/>
            <person name="Seeger R.C."/>
            <person name="Lottspeich F."/>
            <person name="Strahler J.R."/>
            <person name="Hanash S.J."/>
        </authorList>
    </citation>
    <scope>PROTEIN SEQUENCE OF 7-18; 40-49 AND 89-94 (ISOFORMS 1/2)</scope>
    <scope>DISCUSSION OF THE ROLE IN TUMOR PROGRESSION</scope>
    <source>
        <tissue>Neuroblastoma</tissue>
    </source>
</reference>
<reference key="12">
    <citation type="submission" date="2008-12" db="UniProtKB">
        <authorList>
            <person name="Lubec G."/>
            <person name="Afjehi-Sadat L."/>
            <person name="Chen W.-Q."/>
            <person name="Sun Y."/>
        </authorList>
    </citation>
    <scope>PROTEIN SEQUENCE OF 7-26; 40-49; 57-85 AND 89-128 (ISOFORMS 1/2)</scope>
    <scope>IDENTIFICATION BY MASS SPECTROMETRY</scope>
    <source>
        <tissue>Brain</tissue>
        <tissue>Cajal-Retzius cell</tissue>
        <tissue>Fetal brain cortex</tissue>
    </source>
</reference>
<reference key="13">
    <citation type="journal article" date="1996" name="J. Biol. Chem.">
        <title>Site-directed mutagenesis of nm23-H1. Mutation of proline 96 or serine 120 abrogates its motility inhibitory activity upon transfection into human breast carcinoma cells.</title>
        <authorList>
            <person name="MacDonald N.J."/>
            <person name="Freije J.M."/>
            <person name="Stracke M.L."/>
            <person name="Manrow R.E."/>
            <person name="Steeg P.S."/>
        </authorList>
    </citation>
    <scope>FUNCTION</scope>
    <scope>MUTAGENESIS OF PRO-96; HIS-118 AND SER-120</scope>
</reference>
<reference key="14">
    <citation type="journal article" date="1999" name="Genomics">
        <title>Identification of genes (SPON2 and C20orf2) differentially expressed between cancerous and noncancerous lung cells by mRNA differential display.</title>
        <authorList>
            <person name="Manda R."/>
            <person name="Kohno T."/>
            <person name="Matsuno Y."/>
            <person name="Takenoshita S."/>
            <person name="Kuwano H."/>
            <person name="Yokota J."/>
        </authorList>
    </citation>
    <scope>TISSUE SPECIFICITY</scope>
</reference>
<reference key="15">
    <citation type="journal article" date="2003" name="Cell">
        <title>Tumor suppressor NM23-H1 is a granzyme A-activated DNase during CTL-mediated apoptosis, and the nucleosome assembly protein SET is its inhibitor.</title>
        <authorList>
            <person name="Fan Z."/>
            <person name="Beresford P.J."/>
            <person name="Oh D.Y."/>
            <person name="Zhang D."/>
            <person name="Lieberman J."/>
        </authorList>
    </citation>
    <scope>FUNCTION</scope>
    <scope>ACTIVITY REGULATION</scope>
    <scope>INTERACTION WITH SET</scope>
    <scope>IDENTIFICATION IN THE SET COMPLEX</scope>
</reference>
<reference key="16">
    <citation type="journal article" date="2006" name="Genomics">
        <title>Read-through transcript from NM23-H1 into the neighboring NM23-H2 gene encodes a novel protein, NM23-LV.</title>
        <authorList>
            <person name="Valentijn L.J."/>
            <person name="Koster J."/>
            <person name="Versteeg R."/>
        </authorList>
    </citation>
    <scope>ALTERNATIVE SPLICING (ISOFORM 3)</scope>
    <scope>SUBCELLULAR LOCATION</scope>
    <scope>TISSUE SPECIFICITY</scope>
</reference>
<reference key="17">
    <citation type="journal article" date="2006" name="Mol. Cell">
        <title>The exonuclease TREX1 is in the SET complex and acts in concert with NM23-H1 to degrade DNA during granzyme A-mediated cell death.</title>
        <authorList>
            <person name="Chowdhury D."/>
            <person name="Beresford P.J."/>
            <person name="Zhu P."/>
            <person name="Zhang D."/>
            <person name="Sung J.S."/>
            <person name="Demple B."/>
            <person name="Perrino F.W."/>
            <person name="Lieberman J."/>
        </authorList>
    </citation>
    <scope>FUNCTION</scope>
    <scope>INTERACTION WITH TREX1</scope>
    <scope>IDENTIFICATION IN THE SET COMPLEX</scope>
</reference>
<reference key="18">
    <citation type="journal article" date="2008" name="Oncogene">
        <title>Phosphorylation of nm23-H1 by CKI induces its complex formation with h-prune and promotes cell motility.</title>
        <authorList>
            <person name="Garzia L."/>
            <person name="D'Angelo A."/>
            <person name="Amoresano A."/>
            <person name="Knauer S.K."/>
            <person name="Cirulli C."/>
            <person name="Campanella C."/>
            <person name="Stauber R.H."/>
            <person name="Steegborn C."/>
            <person name="Iolascon A."/>
            <person name="Zollo M."/>
        </authorList>
    </citation>
    <scope>INTERACTION WITH PRUNE1</scope>
</reference>
<reference key="19">
    <citation type="journal article" date="2011" name="BMC Syst. Biol.">
        <title>Initial characterization of the human central proteome.</title>
        <authorList>
            <person name="Burkard T.R."/>
            <person name="Planyavsky M."/>
            <person name="Kaupe I."/>
            <person name="Breitwieser F.P."/>
            <person name="Buerckstuemmer T."/>
            <person name="Bennett K.L."/>
            <person name="Superti-Furga G."/>
            <person name="Colinge J."/>
        </authorList>
    </citation>
    <scope>IDENTIFICATION BY MASS SPECTROMETRY [LARGE SCALE ANALYSIS]</scope>
</reference>
<reference key="20">
    <citation type="journal article" date="2012" name="J. Proteome Res.">
        <title>Resveratrol-induced changes of the human adipocyte secretion profile.</title>
        <authorList>
            <person name="Rosenow A."/>
            <person name="Noben J.P."/>
            <person name="Jocken J."/>
            <person name="Kallendrusch S."/>
            <person name="Fischer-Posovszky P."/>
            <person name="Mariman E.C."/>
            <person name="Renes J."/>
        </authorList>
    </citation>
    <scope>IDENTIFICATION BY MASS SPECTROMETRY [LARGE SCALE ANALYSIS]</scope>
</reference>
<reference key="21">
    <citation type="journal article" date="2013" name="J. Proteome Res.">
        <title>Toward a comprehensive characterization of a human cancer cell phosphoproteome.</title>
        <authorList>
            <person name="Zhou H."/>
            <person name="Di Palma S."/>
            <person name="Preisinger C."/>
            <person name="Peng M."/>
            <person name="Polat A.N."/>
            <person name="Heck A.J."/>
            <person name="Mohammed S."/>
        </authorList>
    </citation>
    <scope>PHOSPHORYLATION [LARGE SCALE ANALYSIS] AT SER-120; SER-122 AND SER-125</scope>
    <scope>IDENTIFICATION BY MASS SPECTROMETRY [LARGE SCALE ANALYSIS]</scope>
    <source>
        <tissue>Cervix carcinoma</tissue>
        <tissue>Erythroleukemia</tissue>
    </source>
</reference>
<reference key="22">
    <citation type="journal article" date="2015" name="Proteomics">
        <title>N-terminome analysis of the human mitochondrial proteome.</title>
        <authorList>
            <person name="Vaca Jacome A.S."/>
            <person name="Rabilloud T."/>
            <person name="Schaeffer-Reiss C."/>
            <person name="Rompais M."/>
            <person name="Ayoub D."/>
            <person name="Lane L."/>
            <person name="Bairoch A."/>
            <person name="Van Dorsselaer A."/>
            <person name="Carapito C."/>
        </authorList>
    </citation>
    <scope>IDENTIFICATION BY MASS SPECTROMETRY [LARGE SCALE ANALYSIS]</scope>
</reference>
<reference key="23">
    <citation type="journal article" date="2002" name="Proteins">
        <title>Crystal structure of human nucleoside diphosphate kinase A, a metastasis suppressor.</title>
        <authorList>
            <person name="Min K."/>
            <person name="Song H.K."/>
            <person name="Chang C."/>
            <person name="Kim S.Y."/>
            <person name="Lee K.J."/>
            <person name="Suh S.W."/>
        </authorList>
    </citation>
    <scope>X-RAY CRYSTALLOGRAPHY (2.2 ANGSTROMS)</scope>
</reference>
<reference key="24">
    <citation type="journal article" date="2003" name="J. Mol. Biol.">
        <title>Nucleotide binding to nucleoside diphosphate kinases: X-ray structure of human NDPK-A in complex with ADP and comparison to protein kinases.</title>
        <authorList>
            <person name="Chen Y."/>
            <person name="Gallois-Montbrun S."/>
            <person name="Schneider B."/>
            <person name="Veron M."/>
            <person name="Morera S."/>
            <person name="Deville-Bonne D."/>
            <person name="Janin J."/>
        </authorList>
    </citation>
    <scope>X-RAY CRYSTALLOGRAPHY (2.0 ANGSTROMS)</scope>
    <scope>MUTAGENESIS OF PHE-60 AND HIS-118</scope>
</reference>
<reference key="25">
    <citation type="journal article" date="1994" name="Nature">
        <title>Nm23-H1 mutation in neuroblastoma.</title>
        <authorList>
            <person name="Chang C.L."/>
            <person name="Zhu X.-X."/>
            <person name="Thoraval D.H."/>
            <person name="Ungar D."/>
            <person name="Rawwas J."/>
            <person name="Hora N."/>
            <person name="Strahler J.R."/>
            <person name="Hanash S.M."/>
        </authorList>
    </citation>
    <scope>VARIANT GLY-120</scope>
</reference>
<comment type="function">
    <text evidence="3 6 10">Major role in the synthesis of nucleoside triphosphates other than ATP. The ATP gamma phosphate is transferred to the NDP beta phosphate via a ping-pong mechanism, using a phosphorylated active-site intermediate. Possesses nucleoside-diphosphate kinase, serine/threonine-specific protein kinase, geranyl and farnesyl pyrophosphate kinase, histidine protein kinase and 3'-5' exonuclease activities. Involved in cell proliferation, differentiation and development, signal transduction, G protein-coupled receptor endocytosis, and gene expression. Required for neural development including neural patterning and cell fate determination. During GZMA-mediated cell death, works in concert with TREX1. NME1 nicks one strand of DNA and TREX1 removes bases from the free 3' end to enhance DNA damage and prevent DNA end reannealing and rapid repair.</text>
</comment>
<comment type="catalytic activity">
    <reaction>
        <text>a 2'-deoxyribonucleoside 5'-diphosphate + ATP = a 2'-deoxyribonucleoside 5'-triphosphate + ADP</text>
        <dbReference type="Rhea" id="RHEA:44640"/>
        <dbReference type="ChEBI" id="CHEBI:30616"/>
        <dbReference type="ChEBI" id="CHEBI:61560"/>
        <dbReference type="ChEBI" id="CHEBI:73316"/>
        <dbReference type="ChEBI" id="CHEBI:456216"/>
        <dbReference type="EC" id="2.7.4.6"/>
    </reaction>
</comment>
<comment type="catalytic activity">
    <reaction>
        <text>a ribonucleoside 5'-diphosphate + ATP = a ribonucleoside 5'-triphosphate + ADP</text>
        <dbReference type="Rhea" id="RHEA:18113"/>
        <dbReference type="ChEBI" id="CHEBI:30616"/>
        <dbReference type="ChEBI" id="CHEBI:57930"/>
        <dbReference type="ChEBI" id="CHEBI:61557"/>
        <dbReference type="ChEBI" id="CHEBI:456216"/>
        <dbReference type="EC" id="2.7.4.6"/>
    </reaction>
</comment>
<comment type="cofactor">
    <cofactor>
        <name>Mg(2+)</name>
        <dbReference type="ChEBI" id="CHEBI:18420"/>
    </cofactor>
</comment>
<comment type="activity regulation">
    <text evidence="3">Autophosphorylation at His-118 increases serine/threonine protein kinase activity of the enzyme. Interaction with the SET complex inhibits the endonuclease activity.</text>
</comment>
<comment type="subunit">
    <text evidence="3 6 7 8">Hexamer of two different chains: A and B (A6, A5B, A4B2, A3B3, A2B4, AB5, B6). Interacts with PRUNE1. Component of the SET complex, composed of at least ANP32A, APEX1, HMGB2, NME1, SET and TREX1. Within this complex, interacts directly with SET. Also interacts with TREX1, but only following translocation to the nucleus.</text>
</comment>
<comment type="interaction">
    <interactant intactId="EBI-741141">
        <id>P15531</id>
    </interactant>
    <interactant intactId="EBI-740459">
        <id>P51116</id>
        <label>FXR2</label>
    </interactant>
    <organismsDiffer>false</organismsDiffer>
    <experiments>4</experiments>
</comment>
<comment type="interaction">
    <interactant intactId="EBI-741141">
        <id>P15531</id>
    </interactant>
    <interactant intactId="EBI-739832">
        <id>Q8TBB1</id>
        <label>LNX1</label>
    </interactant>
    <organismsDiffer>false</organismsDiffer>
    <experiments>3</experiments>
</comment>
<comment type="interaction">
    <interactant intactId="EBI-741141">
        <id>P15531</id>
    </interactant>
    <interactant intactId="EBI-1914514">
        <id>P10911</id>
        <label>MCF2</label>
    </interactant>
    <organismsDiffer>false</organismsDiffer>
    <experiments>4</experiments>
</comment>
<comment type="interaction">
    <interactant intactId="EBI-741141">
        <id>P15531</id>
    </interactant>
    <interactant intactId="EBI-1915491">
        <id>PRO_0000030434</id>
        <label>MCF2</label>
        <dbReference type="UniProtKB" id="P10911"/>
    </interactant>
    <organismsDiffer>false</organismsDiffer>
    <experiments>9</experiments>
</comment>
<comment type="interaction">
    <interactant intactId="EBI-741141">
        <id>P15531</id>
    </interactant>
    <interactant intactId="EBI-741141">
        <id>P15531</id>
        <label>NME1</label>
    </interactant>
    <organismsDiffer>false</organismsDiffer>
    <experiments>15</experiments>
</comment>
<comment type="interaction">
    <interactant intactId="EBI-741141">
        <id>P15531</id>
    </interactant>
    <interactant intactId="EBI-713693">
        <id>P22392</id>
        <label>NME2</label>
    </interactant>
    <organismsDiffer>false</organismsDiffer>
    <experiments>7</experiments>
</comment>
<comment type="interaction">
    <interactant intactId="EBI-741141">
        <id>P15531</id>
    </interactant>
    <interactant intactId="EBI-713684">
        <id>Q13232</id>
        <label>NME3</label>
    </interactant>
    <organismsDiffer>false</organismsDiffer>
    <experiments>7</experiments>
</comment>
<comment type="interaction">
    <interactant intactId="EBI-741141">
        <id>P15531</id>
    </interactant>
    <interactant intactId="EBI-744871">
        <id>O00746</id>
        <label>NME4</label>
    </interactant>
    <organismsDiffer>false</organismsDiffer>
    <experiments>12</experiments>
</comment>
<comment type="interaction">
    <interactant intactId="EBI-741141">
        <id>P15531</id>
    </interactant>
    <interactant intactId="EBI-741158">
        <id>Q96HA8</id>
        <label>NTAQ1</label>
    </interactant>
    <organismsDiffer>false</organismsDiffer>
    <experiments>8</experiments>
</comment>
<comment type="interaction">
    <interactant intactId="EBI-741141">
        <id>P15531</id>
    </interactant>
    <interactant intactId="EBI-591778">
        <id>P61970</id>
        <label>NUTF2</label>
    </interactant>
    <organismsDiffer>false</organismsDiffer>
    <experiments>3</experiments>
</comment>
<comment type="interaction">
    <interactant intactId="EBI-741141">
        <id>P15531</id>
    </interactant>
    <interactant intactId="EBI-10256685">
        <id>Q7Z2X4</id>
        <label>PID1</label>
    </interactant>
    <organismsDiffer>false</organismsDiffer>
    <experiments>3</experiments>
</comment>
<comment type="interaction">
    <interactant intactId="EBI-741141">
        <id>P15531</id>
    </interactant>
    <interactant intactId="EBI-1055079">
        <id>O15160</id>
        <label>POLR1C</label>
    </interactant>
    <organismsDiffer>false</organismsDiffer>
    <experiments>11</experiments>
</comment>
<comment type="interaction">
    <interactant intactId="EBI-741141">
        <id>P15531</id>
    </interactant>
    <interactant intactId="EBI-2127112">
        <id>Q86TP1</id>
        <label>PRUNE1</label>
    </interactant>
    <organismsDiffer>false</organismsDiffer>
    <experiments>2</experiments>
</comment>
<comment type="interaction">
    <interactant intactId="EBI-741141">
        <id>P15531</id>
    </interactant>
    <interactant intactId="EBI-10268630">
        <id>Q8N9Q2</id>
        <label>SREK1IP1</label>
    </interactant>
    <organismsDiffer>false</organismsDiffer>
    <experiments>3</experiments>
</comment>
<comment type="interaction">
    <interactant intactId="EBI-741141">
        <id>P15531</id>
    </interactant>
    <interactant intactId="EBI-727414">
        <id>Q9Y3F4</id>
        <label>STRAP</label>
    </interactant>
    <organismsDiffer>false</organismsDiffer>
    <experiments>9</experiments>
</comment>
<comment type="interaction">
    <interactant intactId="EBI-741141">
        <id>P15531</id>
    </interactant>
    <interactant intactId="EBI-431907">
        <id>O14787</id>
        <label>TNPO2</label>
    </interactant>
    <organismsDiffer>false</organismsDiffer>
    <experiments>3</experiments>
</comment>
<comment type="interaction">
    <interactant intactId="EBI-741141">
        <id>P15531</id>
    </interactant>
    <interactant intactId="EBI-1042571">
        <id>Q9Y5L0</id>
        <label>TNPO3</label>
    </interactant>
    <organismsDiffer>false</organismsDiffer>
    <experiments>3</experiments>
</comment>
<comment type="interaction">
    <interactant intactId="EBI-741141">
        <id>P15531</id>
    </interactant>
    <interactant intactId="EBI-1536336">
        <id>Q61097</id>
        <label>Ksr1</label>
    </interactant>
    <organismsDiffer>true</organismsDiffer>
    <experiments>7</experiments>
</comment>
<comment type="subcellular location">
    <subcellularLocation>
        <location evidence="5">Cytoplasm</location>
    </subcellularLocation>
    <subcellularLocation>
        <location evidence="5">Nucleus</location>
    </subcellularLocation>
    <text>Cell-cycle dependent nuclear localization which can be induced by interaction with Epstein-barr viral proteins or by degradation of the SET complex by GzmA.</text>
</comment>
<comment type="alternative products">
    <event type="alternative splicing"/>
    <isoform>
        <id>P15531-1</id>
        <name>1</name>
        <name>NM23-H1A</name>
        <sequence type="displayed"/>
    </isoform>
    <isoform>
        <id>P15531-2</id>
        <name>2</name>
        <name>NM23-H1B</name>
        <sequence type="described" ref="VSP_036707"/>
    </isoform>
    <isoform>
        <id>P22392-2</id>
        <name>3</name>
        <name>NM23-LV</name>
        <sequence type="external"/>
    </isoform>
</comment>
<comment type="tissue specificity">
    <text evidence="1 2 5">Isoform 1 is expressed in heart, brain, placenta, lung, liver, skeletal muscle, pancreas, spleen and thymus. Expressed in lung carcinoma cell lines but not in normal lung tissues. Isoform 2 is ubiquitously expressed and its expression is also related to tumor differentiation.</text>
</comment>
<comment type="miscellaneous">
    <text>The role of this protein in tumor development and progression is uncertain. This protein is found in reduced amount in some tumor cells of high metastatic potential. However, increased NME1 levels correlate with aggressive tumor features in neuroblastoma. May have distinct if not opposite roles in different tumors.</text>
</comment>
<comment type="similarity">
    <text evidence="12">Belongs to the NDK family.</text>
</comment>
<comment type="sequence caution" evidence="12">
    <conflict type="erroneous initiation">
        <sequence resource="EMBL-CDS" id="CAA35621"/>
    </conflict>
    <text>Extended N-terminus.</text>
</comment>
<feature type="chain" id="PRO_0000137114" description="Nucleoside diphosphate kinase A">
    <location>
        <begin position="1"/>
        <end position="152"/>
    </location>
</feature>
<feature type="active site" description="Pros-phosphohistidine intermediate" evidence="8">
    <location>
        <position position="118"/>
    </location>
</feature>
<feature type="binding site">
    <location>
        <position position="12"/>
    </location>
    <ligand>
        <name>ATP</name>
        <dbReference type="ChEBI" id="CHEBI:30616"/>
    </ligand>
</feature>
<feature type="binding site">
    <location>
        <position position="60"/>
    </location>
    <ligand>
        <name>ATP</name>
        <dbReference type="ChEBI" id="CHEBI:30616"/>
    </ligand>
</feature>
<feature type="binding site">
    <location>
        <position position="88"/>
    </location>
    <ligand>
        <name>ATP</name>
        <dbReference type="ChEBI" id="CHEBI:30616"/>
    </ligand>
</feature>
<feature type="binding site">
    <location>
        <position position="94"/>
    </location>
    <ligand>
        <name>ATP</name>
        <dbReference type="ChEBI" id="CHEBI:30616"/>
    </ligand>
</feature>
<feature type="binding site">
    <location>
        <position position="105"/>
    </location>
    <ligand>
        <name>ATP</name>
        <dbReference type="ChEBI" id="CHEBI:30616"/>
    </ligand>
</feature>
<feature type="binding site">
    <location>
        <position position="115"/>
    </location>
    <ligand>
        <name>ATP</name>
        <dbReference type="ChEBI" id="CHEBI:30616"/>
    </ligand>
</feature>
<feature type="modified residue" description="Phosphoserine" evidence="13">
    <location>
        <position position="120"/>
    </location>
</feature>
<feature type="modified residue" description="Phosphoserine" evidence="13">
    <location>
        <position position="122"/>
    </location>
</feature>
<feature type="modified residue" description="Phosphoserine" evidence="13">
    <location>
        <position position="125"/>
    </location>
</feature>
<feature type="cross-link" description="Glycyl lysine isopeptide (Lys-Gly) (interchain with G-Cter in ubiquitin)">
    <location>
        <position position="100"/>
    </location>
</feature>
<feature type="splice variant" id="VSP_036707" description="In isoform 2." evidence="11">
    <original>M</original>
    <variation>MVLLSTLGIVFQGEGPPISSCDTGTM</variation>
    <location>
        <position position="1"/>
    </location>
</feature>
<feature type="sequence variant" id="VAR_004625" description="In a neuroblastoma sample; increased motility of carcinoma cells; dbSNP:rs121917887." evidence="9">
    <original>S</original>
    <variation>G</variation>
    <location>
        <position position="120"/>
    </location>
</feature>
<feature type="mutagenesis site" description="No loss of activity or substrate binding." evidence="4">
    <original>F</original>
    <variation>W</variation>
    <location>
        <position position="60"/>
    </location>
</feature>
<feature type="mutagenesis site" description="Increased motility of carcinoma cells." evidence="10">
    <original>P</original>
    <variation>S</variation>
    <location>
        <position position="96"/>
    </location>
</feature>
<feature type="mutagenesis site" description="Loss of serine/threonine kinase activity. Some loss of motility of carcinoma cells." evidence="4 10">
    <original>H</original>
    <variation>F</variation>
    <location>
        <position position="118"/>
    </location>
</feature>
<feature type="mutagenesis site" description="Loss of activity." evidence="4 10">
    <original>H</original>
    <variation>G</variation>
    <location>
        <position position="118"/>
    </location>
</feature>
<feature type="mutagenesis site" description="Limited increase in motility of carcinoma cells." evidence="10">
    <original>S</original>
    <variation>A</variation>
    <location>
        <position position="120"/>
    </location>
</feature>
<feature type="helix" evidence="16">
    <location>
        <begin position="2"/>
        <end position="4"/>
    </location>
</feature>
<feature type="strand" evidence="16">
    <location>
        <begin position="6"/>
        <end position="11"/>
    </location>
</feature>
<feature type="helix" evidence="16">
    <location>
        <begin position="13"/>
        <end position="17"/>
    </location>
</feature>
<feature type="helix" evidence="16">
    <location>
        <begin position="21"/>
        <end position="31"/>
    </location>
</feature>
<feature type="strand" evidence="16">
    <location>
        <begin position="34"/>
        <end position="41"/>
    </location>
</feature>
<feature type="helix" evidence="16">
    <location>
        <begin position="45"/>
        <end position="51"/>
    </location>
</feature>
<feature type="helix" evidence="16">
    <location>
        <begin position="53"/>
        <end position="55"/>
    </location>
</feature>
<feature type="strand" evidence="15">
    <location>
        <begin position="56"/>
        <end position="58"/>
    </location>
</feature>
<feature type="helix" evidence="16">
    <location>
        <begin position="61"/>
        <end position="69"/>
    </location>
</feature>
<feature type="strand" evidence="16">
    <location>
        <begin position="73"/>
        <end position="80"/>
    </location>
</feature>
<feature type="helix" evidence="16">
    <location>
        <begin position="83"/>
        <end position="91"/>
    </location>
</feature>
<feature type="helix" evidence="16">
    <location>
        <begin position="96"/>
        <end position="98"/>
    </location>
</feature>
<feature type="helix" evidence="16">
    <location>
        <begin position="104"/>
        <end position="108"/>
    </location>
</feature>
<feature type="helix" evidence="14">
    <location>
        <begin position="112"/>
        <end position="114"/>
    </location>
</feature>
<feature type="strand" evidence="16">
    <location>
        <begin position="117"/>
        <end position="119"/>
    </location>
</feature>
<feature type="helix" evidence="16">
    <location>
        <begin position="123"/>
        <end position="133"/>
    </location>
</feature>
<feature type="helix" evidence="16">
    <location>
        <begin position="136"/>
        <end position="138"/>
    </location>
</feature>
<feature type="helix" evidence="16">
    <location>
        <begin position="147"/>
        <end position="150"/>
    </location>
</feature>
<keyword id="KW-0002">3D-structure</keyword>
<keyword id="KW-0025">Alternative splicing</keyword>
<keyword id="KW-0067">ATP-binding</keyword>
<keyword id="KW-0963">Cytoplasm</keyword>
<keyword id="KW-0221">Differentiation</keyword>
<keyword id="KW-0903">Direct protein sequencing</keyword>
<keyword id="KW-0254">Endocytosis</keyword>
<keyword id="KW-1017">Isopeptide bond</keyword>
<keyword id="KW-0418">Kinase</keyword>
<keyword id="KW-0460">Magnesium</keyword>
<keyword id="KW-0479">Metal-binding</keyword>
<keyword id="KW-0524">Neurogenesis</keyword>
<keyword id="KW-0546">Nucleotide metabolism</keyword>
<keyword id="KW-0547">Nucleotide-binding</keyword>
<keyword id="KW-0539">Nucleus</keyword>
<keyword id="KW-0597">Phosphoprotein</keyword>
<keyword id="KW-1267">Proteomics identification</keyword>
<keyword id="KW-1185">Reference proteome</keyword>
<keyword id="KW-0808">Transferase</keyword>
<keyword id="KW-0832">Ubl conjugation</keyword>
<evidence type="ECO:0000269" key="1">
    <source>
    </source>
</evidence>
<evidence type="ECO:0000269" key="2">
    <source>
    </source>
</evidence>
<evidence type="ECO:0000269" key="3">
    <source>
    </source>
</evidence>
<evidence type="ECO:0000269" key="4">
    <source>
    </source>
</evidence>
<evidence type="ECO:0000269" key="5">
    <source>
    </source>
</evidence>
<evidence type="ECO:0000269" key="6">
    <source>
    </source>
</evidence>
<evidence type="ECO:0000269" key="7">
    <source>
    </source>
</evidence>
<evidence type="ECO:0000269" key="8">
    <source>
    </source>
</evidence>
<evidence type="ECO:0000269" key="9">
    <source>
    </source>
</evidence>
<evidence type="ECO:0000269" key="10">
    <source>
    </source>
</evidence>
<evidence type="ECO:0000303" key="11">
    <source>
    </source>
</evidence>
<evidence type="ECO:0000305" key="12"/>
<evidence type="ECO:0007744" key="13">
    <source>
    </source>
</evidence>
<evidence type="ECO:0007829" key="14">
    <source>
        <dbReference type="PDB" id="1UCN"/>
    </source>
</evidence>
<evidence type="ECO:0007829" key="15">
    <source>
        <dbReference type="PDB" id="4ENO"/>
    </source>
</evidence>
<evidence type="ECO:0007829" key="16">
    <source>
        <dbReference type="PDB" id="8OOV"/>
    </source>
</evidence>
<dbReference type="EC" id="2.7.4.6"/>
<dbReference type="EMBL" id="X17620">
    <property type="protein sequence ID" value="CAA35621.1"/>
    <property type="status" value="ALT_INIT"/>
    <property type="molecule type" value="mRNA"/>
</dbReference>
<dbReference type="EMBL" id="X73066">
    <property type="protein sequence ID" value="CAA51527.1"/>
    <property type="molecule type" value="mRNA"/>
</dbReference>
<dbReference type="EMBL" id="X75598">
    <property type="protein sequence ID" value="CAA53270.1"/>
    <property type="molecule type" value="Genomic_DNA"/>
</dbReference>
<dbReference type="EMBL" id="AF487339">
    <property type="protein sequence ID" value="AAO85436.1"/>
    <property type="molecule type" value="mRNA"/>
</dbReference>
<dbReference type="EMBL" id="AK291105">
    <property type="protein sequence ID" value="BAF83794.1"/>
    <property type="molecule type" value="mRNA"/>
</dbReference>
<dbReference type="EMBL" id="CR542104">
    <property type="protein sequence ID" value="CAG46901.1"/>
    <property type="molecule type" value="mRNA"/>
</dbReference>
<dbReference type="EMBL" id="CR542115">
    <property type="protein sequence ID" value="CAG46912.1"/>
    <property type="molecule type" value="mRNA"/>
</dbReference>
<dbReference type="EMBL" id="AC005839">
    <property type="status" value="NOT_ANNOTATED_CDS"/>
    <property type="molecule type" value="Genomic_DNA"/>
</dbReference>
<dbReference type="EMBL" id="CH471109">
    <property type="protein sequence ID" value="EAW94568.1"/>
    <property type="molecule type" value="Genomic_DNA"/>
</dbReference>
<dbReference type="EMBL" id="BC000293">
    <property type="protein sequence ID" value="AAH00293.1"/>
    <property type="molecule type" value="mRNA"/>
</dbReference>
<dbReference type="EMBL" id="BC018994">
    <property type="protein sequence ID" value="AAH18994.1"/>
    <property type="molecule type" value="mRNA"/>
</dbReference>
<dbReference type="CCDS" id="CCDS11578.1">
    <molecule id="P15531-2"/>
</dbReference>
<dbReference type="CCDS" id="CCDS11579.1">
    <molecule id="P15531-1"/>
</dbReference>
<dbReference type="PIR" id="A33386">
    <property type="entry name" value="A33386"/>
</dbReference>
<dbReference type="RefSeq" id="NP_000260.1">
    <molecule id="P15531-1"/>
    <property type="nucleotide sequence ID" value="NM_000269.3"/>
</dbReference>
<dbReference type="RefSeq" id="NP_937818.1">
    <molecule id="P15531-2"/>
    <property type="nucleotide sequence ID" value="NM_198175.1"/>
</dbReference>
<dbReference type="PDB" id="1JXV">
    <property type="method" value="X-ray"/>
    <property type="resolution" value="2.20 A"/>
    <property type="chains" value="A/B/C/D/E/F=1-152"/>
</dbReference>
<dbReference type="PDB" id="1UCN">
    <property type="method" value="X-ray"/>
    <property type="resolution" value="2.00 A"/>
    <property type="chains" value="A/B/C=1-152"/>
</dbReference>
<dbReference type="PDB" id="2HVD">
    <property type="method" value="X-ray"/>
    <property type="resolution" value="2.15 A"/>
    <property type="chains" value="A/B/C=1-152"/>
</dbReference>
<dbReference type="PDB" id="2HVE">
    <property type="method" value="X-ray"/>
    <property type="resolution" value="2.40 A"/>
    <property type="chains" value="A/B/C=1-152"/>
</dbReference>
<dbReference type="PDB" id="3L7U">
    <property type="method" value="X-ray"/>
    <property type="resolution" value="2.10 A"/>
    <property type="chains" value="A/B/C=1-152"/>
</dbReference>
<dbReference type="PDB" id="4ENO">
    <property type="method" value="X-ray"/>
    <property type="resolution" value="2.80 A"/>
    <property type="chains" value="A/B=1-152"/>
</dbReference>
<dbReference type="PDB" id="5UI4">
    <property type="method" value="X-ray"/>
    <property type="resolution" value="2.75 A"/>
    <property type="chains" value="A/B/C/D/E/F=1-152"/>
</dbReference>
<dbReference type="PDB" id="8OOV">
    <property type="method" value="X-ray"/>
    <property type="resolution" value="1.70 A"/>
    <property type="chains" value="A/B/C=1-152"/>
</dbReference>
<dbReference type="PDBsum" id="1JXV"/>
<dbReference type="PDBsum" id="1UCN"/>
<dbReference type="PDBsum" id="2HVD"/>
<dbReference type="PDBsum" id="2HVE"/>
<dbReference type="PDBsum" id="3L7U"/>
<dbReference type="PDBsum" id="4ENO"/>
<dbReference type="PDBsum" id="5UI4"/>
<dbReference type="PDBsum" id="8OOV"/>
<dbReference type="SMR" id="P15531"/>
<dbReference type="BioGRID" id="110894">
    <property type="interactions" value="204"/>
</dbReference>
<dbReference type="CORUM" id="P15531"/>
<dbReference type="DIP" id="DIP-39164N"/>
<dbReference type="FunCoup" id="P15531">
    <property type="interactions" value="1706"/>
</dbReference>
<dbReference type="IntAct" id="P15531">
    <property type="interactions" value="98"/>
</dbReference>
<dbReference type="MINT" id="P15531"/>
<dbReference type="STRING" id="9606.ENSP00000337060"/>
<dbReference type="ChEMBL" id="CHEMBL2159"/>
<dbReference type="DrugBank" id="DB02569">
    <property type="generic name" value="2',3'-Dehydro-2',3'-Deoxy-Thymidine 5'-Diphosphate"/>
</dbReference>
<dbReference type="DrugBank" id="DB04068">
    <property type="generic name" value="2',3'-dideoxy-3'-fluoro-urididine-5'-diphosphate"/>
</dbReference>
<dbReference type="DrugBank" id="DB03491">
    <property type="generic name" value="2'-Deoxyguanosine-5'-Diphosphate"/>
</dbReference>
<dbReference type="DrugBank" id="DB02181">
    <property type="generic name" value="2'-Deoxyguanosine-5'-Triphosphate"/>
</dbReference>
<dbReference type="DrugBank" id="DB04366">
    <property type="generic name" value="3'-Deoxy 3'-Amino Adenosine-5'-Diphosphate"/>
</dbReference>
<dbReference type="DrugBank" id="DB00787">
    <property type="generic name" value="Acyclovir"/>
</dbReference>
<dbReference type="DrugBank" id="DB00718">
    <property type="generic name" value="Adefovir dipivoxil"/>
</dbReference>
<dbReference type="DrugBank" id="DB00640">
    <property type="generic name" value="Adenosine"/>
</dbReference>
<dbReference type="DrugBank" id="DB02607">
    <property type="generic name" value="Adenosine Phosphonoacetic Acid"/>
</dbReference>
<dbReference type="DrugBank" id="DB09130">
    <property type="generic name" value="Copper"/>
</dbReference>
<dbReference type="DrugBank" id="DB01262">
    <property type="generic name" value="Decitabine"/>
</dbReference>
<dbReference type="DrugBank" id="DB00441">
    <property type="generic name" value="Gemcitabine"/>
</dbReference>
<dbReference type="DrugBank" id="DB04315">
    <property type="generic name" value="Guanosine-5'-Diphosphate"/>
</dbReference>
<dbReference type="DrugBank" id="DB00709">
    <property type="generic name" value="Lamivudine"/>
</dbReference>
<dbReference type="DrugBank" id="DB02345">
    <property type="generic name" value="Selenocysteine"/>
</dbReference>
<dbReference type="DrugBank" id="DB08934">
    <property type="generic name" value="Sofosbuvir"/>
</dbReference>
<dbReference type="DrugBank" id="DB02887">
    <property type="generic name" value="Stavudine triphosphate"/>
</dbReference>
<dbReference type="DrugBank" id="DB14126">
    <property type="generic name" value="Tenofovir"/>
</dbReference>
<dbReference type="DrugBank" id="DB09299">
    <property type="generic name" value="Tenofovir alafenamide"/>
</dbReference>
<dbReference type="DrugBank" id="DB00300">
    <property type="generic name" value="Tenofovir disoproxil"/>
</dbReference>
<dbReference type="DrugBank" id="DB03103">
    <property type="generic name" value="Thymidine-5'- Diphosphate"/>
</dbReference>
<dbReference type="DrugBank" id="DB04542">
    <property type="generic name" value="Zidovudine diphosphate"/>
</dbReference>
<dbReference type="DrugBank" id="DB01593">
    <property type="generic name" value="Zinc"/>
</dbReference>
<dbReference type="DrugBank" id="DB14487">
    <property type="generic name" value="Zinc acetate"/>
</dbReference>
<dbReference type="DrugBank" id="DB14533">
    <property type="generic name" value="Zinc chloride"/>
</dbReference>
<dbReference type="DrugBank" id="DB14548">
    <property type="generic name" value="Zinc sulfate, unspecified form"/>
</dbReference>
<dbReference type="GlyGen" id="P15531">
    <property type="glycosylation" value="1 site, 1 O-linked glycan (1 site)"/>
</dbReference>
<dbReference type="iPTMnet" id="P15531"/>
<dbReference type="MetOSite" id="P15531"/>
<dbReference type="PhosphoSitePlus" id="P15531"/>
<dbReference type="SwissPalm" id="P15531"/>
<dbReference type="BioMuta" id="NME1"/>
<dbReference type="DMDM" id="127981"/>
<dbReference type="OGP" id="P15531"/>
<dbReference type="jPOST" id="P15531"/>
<dbReference type="MassIVE" id="P15531"/>
<dbReference type="PaxDb" id="9606-ENSP00000337060"/>
<dbReference type="PeptideAtlas" id="P15531"/>
<dbReference type="ProteomicsDB" id="53183">
    <molecule id="P15531-1"/>
</dbReference>
<dbReference type="ProteomicsDB" id="53184">
    <molecule id="P15531-2"/>
</dbReference>
<dbReference type="Pumba" id="P15531"/>
<dbReference type="TopDownProteomics" id="P15531-1">
    <molecule id="P15531-1"/>
</dbReference>
<dbReference type="Antibodypedia" id="35046">
    <property type="antibodies" value="1485 antibodies from 43 providers"/>
</dbReference>
<dbReference type="CPTC" id="P15531">
    <property type="antibodies" value="4 antibodies"/>
</dbReference>
<dbReference type="DNASU" id="4830"/>
<dbReference type="Ensembl" id="ENST00000013034.3">
    <molecule id="P15531-2"/>
    <property type="protein sequence ID" value="ENSP00000013034.3"/>
    <property type="gene ID" value="ENSG00000239672.8"/>
</dbReference>
<dbReference type="Ensembl" id="ENST00000336097.7">
    <molecule id="P15531-2"/>
    <property type="protein sequence ID" value="ENSP00000337060.3"/>
    <property type="gene ID" value="ENSG00000239672.8"/>
</dbReference>
<dbReference type="Ensembl" id="ENST00000393196.8">
    <molecule id="P15531-1"/>
    <property type="protein sequence ID" value="ENSP00000376892.3"/>
    <property type="gene ID" value="ENSG00000239672.8"/>
</dbReference>
<dbReference type="GeneID" id="4830"/>
<dbReference type="KEGG" id="hsa:4830"/>
<dbReference type="MANE-Select" id="ENST00000393196.8">
    <property type="protein sequence ID" value="ENSP00000376892.3"/>
    <property type="RefSeq nucleotide sequence ID" value="NM_000269.3"/>
    <property type="RefSeq protein sequence ID" value="NP_000260.1"/>
</dbReference>
<dbReference type="UCSC" id="uc002ith.3">
    <molecule id="P15531-1"/>
    <property type="organism name" value="human"/>
</dbReference>
<dbReference type="AGR" id="HGNC:7849"/>
<dbReference type="CTD" id="4830"/>
<dbReference type="DisGeNET" id="4830"/>
<dbReference type="GeneCards" id="NME1"/>
<dbReference type="HGNC" id="HGNC:7849">
    <property type="gene designation" value="NME1"/>
</dbReference>
<dbReference type="HPA" id="ENSG00000239672">
    <property type="expression patterns" value="Low tissue specificity"/>
</dbReference>
<dbReference type="MalaCards" id="NME1"/>
<dbReference type="MIM" id="156490">
    <property type="type" value="gene"/>
</dbReference>
<dbReference type="neXtProt" id="NX_P15531"/>
<dbReference type="OpenTargets" id="ENSG00000239672"/>
<dbReference type="PharmGKB" id="PA249"/>
<dbReference type="VEuPathDB" id="HostDB:ENSG00000239672"/>
<dbReference type="eggNOG" id="KOG0888">
    <property type="taxonomic scope" value="Eukaryota"/>
</dbReference>
<dbReference type="GeneTree" id="ENSGT00940000162213"/>
<dbReference type="InParanoid" id="P15531"/>
<dbReference type="OrthoDB" id="2162449at2759"/>
<dbReference type="PAN-GO" id="P15531">
    <property type="GO annotations" value="1 GO annotation based on evolutionary models"/>
</dbReference>
<dbReference type="PhylomeDB" id="P15531"/>
<dbReference type="TreeFam" id="TF106373"/>
<dbReference type="BioCyc" id="MetaCyc:ENSG00000011052-MONOMER"/>
<dbReference type="BRENDA" id="2.7.13.3">
    <property type="organism ID" value="2681"/>
</dbReference>
<dbReference type="BRENDA" id="2.7.4.6">
    <property type="organism ID" value="2681"/>
</dbReference>
<dbReference type="PathwayCommons" id="P15531"/>
<dbReference type="Reactome" id="R-HSA-499943">
    <property type="pathway name" value="Interconversion of nucleotide di- and triphosphates"/>
</dbReference>
<dbReference type="Reactome" id="R-HSA-9748787">
    <property type="pathway name" value="Azathioprine ADME"/>
</dbReference>
<dbReference type="Reactome" id="R-HSA-9755088">
    <property type="pathway name" value="Ribavirin ADME"/>
</dbReference>
<dbReference type="SignaLink" id="P15531"/>
<dbReference type="SIGNOR" id="P15531"/>
<dbReference type="BioGRID-ORCS" id="4830">
    <property type="hits" value="12 hits in 1131 CRISPR screens"/>
</dbReference>
<dbReference type="CD-CODE" id="91857CE7">
    <property type="entry name" value="Nucleolus"/>
</dbReference>
<dbReference type="EvolutionaryTrace" id="P15531"/>
<dbReference type="GeneWiki" id="NME1"/>
<dbReference type="GenomeRNAi" id="4830"/>
<dbReference type="Pharos" id="P15531">
    <property type="development level" value="Tbio"/>
</dbReference>
<dbReference type="PRO" id="PR:P15531"/>
<dbReference type="Proteomes" id="UP000005640">
    <property type="component" value="Chromosome 17"/>
</dbReference>
<dbReference type="RNAct" id="P15531">
    <property type="molecule type" value="protein"/>
</dbReference>
<dbReference type="Bgee" id="ENSG00000239672">
    <property type="expression patterns" value="Expressed in cortical plate and 113 other cell types or tissues"/>
</dbReference>
<dbReference type="ExpressionAtlas" id="P15531">
    <property type="expression patterns" value="baseline and differential"/>
</dbReference>
<dbReference type="GO" id="GO:0005737">
    <property type="term" value="C:cytoplasm"/>
    <property type="evidence" value="ECO:0000304"/>
    <property type="project" value="UniProtKB"/>
</dbReference>
<dbReference type="GO" id="GO:0005829">
    <property type="term" value="C:cytosol"/>
    <property type="evidence" value="ECO:0000314"/>
    <property type="project" value="UniProtKB"/>
</dbReference>
<dbReference type="GO" id="GO:0005769">
    <property type="term" value="C:early endosome"/>
    <property type="evidence" value="ECO:0000314"/>
    <property type="project" value="UniProtKB"/>
</dbReference>
<dbReference type="GO" id="GO:0070062">
    <property type="term" value="C:extracellular exosome"/>
    <property type="evidence" value="ECO:0007005"/>
    <property type="project" value="UniProtKB"/>
</dbReference>
<dbReference type="GO" id="GO:0016020">
    <property type="term" value="C:membrane"/>
    <property type="evidence" value="ECO:0007005"/>
    <property type="project" value="UniProtKB"/>
</dbReference>
<dbReference type="GO" id="GO:0005634">
    <property type="term" value="C:nucleus"/>
    <property type="evidence" value="ECO:0000314"/>
    <property type="project" value="UniProtKB"/>
</dbReference>
<dbReference type="GO" id="GO:0032587">
    <property type="term" value="C:ruffle membrane"/>
    <property type="evidence" value="ECO:0000314"/>
    <property type="project" value="UniProtKB"/>
</dbReference>
<dbReference type="GO" id="GO:0008408">
    <property type="term" value="F:3'-5' exonuclease activity"/>
    <property type="evidence" value="ECO:0000314"/>
    <property type="project" value="UniProtKB"/>
</dbReference>
<dbReference type="GO" id="GO:0005524">
    <property type="term" value="F:ATP binding"/>
    <property type="evidence" value="ECO:0000314"/>
    <property type="project" value="UniProtKB"/>
</dbReference>
<dbReference type="GO" id="GO:0004536">
    <property type="term" value="F:DNA nuclease activity"/>
    <property type="evidence" value="ECO:0000314"/>
    <property type="project" value="UniProtKB"/>
</dbReference>
<dbReference type="GO" id="GO:0005525">
    <property type="term" value="F:GTP binding"/>
    <property type="evidence" value="ECO:0000314"/>
    <property type="project" value="UniProtKB"/>
</dbReference>
<dbReference type="GO" id="GO:0042802">
    <property type="term" value="F:identical protein binding"/>
    <property type="evidence" value="ECO:0000353"/>
    <property type="project" value="IntAct"/>
</dbReference>
<dbReference type="GO" id="GO:0000287">
    <property type="term" value="F:magnesium ion binding"/>
    <property type="evidence" value="ECO:0000314"/>
    <property type="project" value="UniProtKB"/>
</dbReference>
<dbReference type="GO" id="GO:0004550">
    <property type="term" value="F:nucleoside diphosphate kinase activity"/>
    <property type="evidence" value="ECO:0000314"/>
    <property type="project" value="UniProtKB"/>
</dbReference>
<dbReference type="GO" id="GO:0043024">
    <property type="term" value="F:ribosomal small subunit binding"/>
    <property type="evidence" value="ECO:0000353"/>
    <property type="project" value="UniProtKB"/>
</dbReference>
<dbReference type="GO" id="GO:0003723">
    <property type="term" value="F:RNA binding"/>
    <property type="evidence" value="ECO:0007005"/>
    <property type="project" value="UniProtKB"/>
</dbReference>
<dbReference type="GO" id="GO:0030154">
    <property type="term" value="P:cell differentiation"/>
    <property type="evidence" value="ECO:0007669"/>
    <property type="project" value="UniProtKB-KW"/>
</dbReference>
<dbReference type="GO" id="GO:0006241">
    <property type="term" value="P:CTP biosynthetic process"/>
    <property type="evidence" value="ECO:0007669"/>
    <property type="project" value="InterPro"/>
</dbReference>
<dbReference type="GO" id="GO:0006897">
    <property type="term" value="P:endocytosis"/>
    <property type="evidence" value="ECO:0007669"/>
    <property type="project" value="UniProtKB-KW"/>
</dbReference>
<dbReference type="GO" id="GO:0006183">
    <property type="term" value="P:GTP biosynthetic process"/>
    <property type="evidence" value="ECO:0007669"/>
    <property type="project" value="InterPro"/>
</dbReference>
<dbReference type="GO" id="GO:0007595">
    <property type="term" value="P:lactation"/>
    <property type="evidence" value="ECO:0007669"/>
    <property type="project" value="Ensembl"/>
</dbReference>
<dbReference type="GO" id="GO:0008285">
    <property type="term" value="P:negative regulation of cell population proliferation"/>
    <property type="evidence" value="ECO:0000304"/>
    <property type="project" value="UniProtKB"/>
</dbReference>
<dbReference type="GO" id="GO:0007399">
    <property type="term" value="P:nervous system development"/>
    <property type="evidence" value="ECO:0007669"/>
    <property type="project" value="UniProtKB-KW"/>
</dbReference>
<dbReference type="GO" id="GO:0043388">
    <property type="term" value="P:positive regulation of DNA binding"/>
    <property type="evidence" value="ECO:0000314"/>
    <property type="project" value="UniProtKB"/>
</dbReference>
<dbReference type="GO" id="GO:0050679">
    <property type="term" value="P:positive regulation of epithelial cell proliferation"/>
    <property type="evidence" value="ECO:0000315"/>
    <property type="project" value="HGNC-UCL"/>
</dbReference>
<dbReference type="GO" id="GO:0042981">
    <property type="term" value="P:regulation of apoptotic process"/>
    <property type="evidence" value="ECO:0000304"/>
    <property type="project" value="UniProtKB"/>
</dbReference>
<dbReference type="GO" id="GO:0006228">
    <property type="term" value="P:UTP biosynthetic process"/>
    <property type="evidence" value="ECO:0007669"/>
    <property type="project" value="InterPro"/>
</dbReference>
<dbReference type="CDD" id="cd04413">
    <property type="entry name" value="NDPk_I"/>
    <property type="match status" value="1"/>
</dbReference>
<dbReference type="FunFam" id="3.30.70.141:FF:000039">
    <property type="entry name" value="Nucleoside diphosphate kinase B"/>
    <property type="match status" value="1"/>
</dbReference>
<dbReference type="Gene3D" id="3.30.70.141">
    <property type="entry name" value="Nucleoside diphosphate kinase-like domain"/>
    <property type="match status" value="1"/>
</dbReference>
<dbReference type="HAMAP" id="MF_00451">
    <property type="entry name" value="NDP_kinase"/>
    <property type="match status" value="1"/>
</dbReference>
<dbReference type="InterPro" id="IPR034907">
    <property type="entry name" value="NDK-like_dom"/>
</dbReference>
<dbReference type="InterPro" id="IPR036850">
    <property type="entry name" value="NDK-like_dom_sf"/>
</dbReference>
<dbReference type="InterPro" id="IPR001564">
    <property type="entry name" value="Nucleoside_diP_kinase"/>
</dbReference>
<dbReference type="InterPro" id="IPR023005">
    <property type="entry name" value="Nucleoside_diP_kinase_AS"/>
</dbReference>
<dbReference type="NCBIfam" id="NF001908">
    <property type="entry name" value="PRK00668.1"/>
    <property type="match status" value="1"/>
</dbReference>
<dbReference type="PANTHER" id="PTHR11349">
    <property type="entry name" value="NUCLEOSIDE DIPHOSPHATE KINASE"/>
    <property type="match status" value="1"/>
</dbReference>
<dbReference type="Pfam" id="PF00334">
    <property type="entry name" value="NDK"/>
    <property type="match status" value="1"/>
</dbReference>
<dbReference type="PRINTS" id="PR01243">
    <property type="entry name" value="NUCDPKINASE"/>
</dbReference>
<dbReference type="SMART" id="SM00562">
    <property type="entry name" value="NDK"/>
    <property type="match status" value="1"/>
</dbReference>
<dbReference type="SUPFAM" id="SSF54919">
    <property type="entry name" value="Nucleoside diphosphate kinase, NDK"/>
    <property type="match status" value="1"/>
</dbReference>
<dbReference type="PROSITE" id="PS00469">
    <property type="entry name" value="NDPK"/>
    <property type="match status" value="1"/>
</dbReference>
<dbReference type="PROSITE" id="PS51374">
    <property type="entry name" value="NDPK_LIKE"/>
    <property type="match status" value="1"/>
</dbReference>
<protein>
    <recommendedName>
        <fullName>Nucleoside diphosphate kinase A</fullName>
        <shortName>NDK A</shortName>
        <shortName>NDP kinase A</shortName>
        <ecNumber>2.7.4.6</ecNumber>
    </recommendedName>
    <alternativeName>
        <fullName>Granzyme A-activated DNase</fullName>
        <shortName>GAAD</shortName>
    </alternativeName>
    <alternativeName>
        <fullName>Metastasis inhibition factor nm23</fullName>
    </alternativeName>
    <alternativeName>
        <fullName>NM23-H1</fullName>
    </alternativeName>
    <alternativeName>
        <fullName>Tumor metastatic process-associated protein</fullName>
    </alternativeName>
</protein>
<organism>
    <name type="scientific">Homo sapiens</name>
    <name type="common">Human</name>
    <dbReference type="NCBI Taxonomy" id="9606"/>
    <lineage>
        <taxon>Eukaryota</taxon>
        <taxon>Metazoa</taxon>
        <taxon>Chordata</taxon>
        <taxon>Craniata</taxon>
        <taxon>Vertebrata</taxon>
        <taxon>Euteleostomi</taxon>
        <taxon>Mammalia</taxon>
        <taxon>Eutheria</taxon>
        <taxon>Euarchontoglires</taxon>
        <taxon>Primates</taxon>
        <taxon>Haplorrhini</taxon>
        <taxon>Catarrhini</taxon>
        <taxon>Hominidae</taxon>
        <taxon>Homo</taxon>
    </lineage>
</organism>
<gene>
    <name type="primary">NME1</name>
    <name type="synonym">NDPKA</name>
    <name type="synonym">NM23</name>
</gene>